<accession>B1J432</accession>
<dbReference type="EC" id="2.1.2.9" evidence="1"/>
<dbReference type="EMBL" id="CP000949">
    <property type="protein sequence ID" value="ACA70592.1"/>
    <property type="molecule type" value="Genomic_DNA"/>
</dbReference>
<dbReference type="SMR" id="B1J432"/>
<dbReference type="STRING" id="390235.PputW619_0086"/>
<dbReference type="KEGG" id="ppw:PputW619_0086"/>
<dbReference type="eggNOG" id="COG0223">
    <property type="taxonomic scope" value="Bacteria"/>
</dbReference>
<dbReference type="HOGENOM" id="CLU_033347_1_2_6"/>
<dbReference type="OrthoDB" id="9802815at2"/>
<dbReference type="GO" id="GO:0005829">
    <property type="term" value="C:cytosol"/>
    <property type="evidence" value="ECO:0007669"/>
    <property type="project" value="TreeGrafter"/>
</dbReference>
<dbReference type="GO" id="GO:0004479">
    <property type="term" value="F:methionyl-tRNA formyltransferase activity"/>
    <property type="evidence" value="ECO:0007669"/>
    <property type="project" value="UniProtKB-UniRule"/>
</dbReference>
<dbReference type="CDD" id="cd08646">
    <property type="entry name" value="FMT_core_Met-tRNA-FMT_N"/>
    <property type="match status" value="1"/>
</dbReference>
<dbReference type="CDD" id="cd08704">
    <property type="entry name" value="Met_tRNA_FMT_C"/>
    <property type="match status" value="1"/>
</dbReference>
<dbReference type="FunFam" id="3.40.50.170:FF:000003">
    <property type="entry name" value="Methionyl-tRNA formyltransferase"/>
    <property type="match status" value="1"/>
</dbReference>
<dbReference type="Gene3D" id="3.10.25.10">
    <property type="entry name" value="Formyl transferase, C-terminal domain"/>
    <property type="match status" value="1"/>
</dbReference>
<dbReference type="Gene3D" id="3.40.50.170">
    <property type="entry name" value="Formyl transferase, N-terminal domain"/>
    <property type="match status" value="1"/>
</dbReference>
<dbReference type="HAMAP" id="MF_00182">
    <property type="entry name" value="Formyl_trans"/>
    <property type="match status" value="1"/>
</dbReference>
<dbReference type="InterPro" id="IPR005794">
    <property type="entry name" value="Fmt"/>
</dbReference>
<dbReference type="InterPro" id="IPR005793">
    <property type="entry name" value="Formyl_trans_C"/>
</dbReference>
<dbReference type="InterPro" id="IPR037022">
    <property type="entry name" value="Formyl_trans_C_sf"/>
</dbReference>
<dbReference type="InterPro" id="IPR002376">
    <property type="entry name" value="Formyl_transf_N"/>
</dbReference>
<dbReference type="InterPro" id="IPR036477">
    <property type="entry name" value="Formyl_transf_N_sf"/>
</dbReference>
<dbReference type="InterPro" id="IPR011034">
    <property type="entry name" value="Formyl_transferase-like_C_sf"/>
</dbReference>
<dbReference type="InterPro" id="IPR001555">
    <property type="entry name" value="GART_AS"/>
</dbReference>
<dbReference type="InterPro" id="IPR044135">
    <property type="entry name" value="Met-tRNA-FMT_C"/>
</dbReference>
<dbReference type="InterPro" id="IPR041711">
    <property type="entry name" value="Met-tRNA-FMT_N"/>
</dbReference>
<dbReference type="NCBIfam" id="TIGR00460">
    <property type="entry name" value="fmt"/>
    <property type="match status" value="1"/>
</dbReference>
<dbReference type="PANTHER" id="PTHR11138">
    <property type="entry name" value="METHIONYL-TRNA FORMYLTRANSFERASE"/>
    <property type="match status" value="1"/>
</dbReference>
<dbReference type="PANTHER" id="PTHR11138:SF5">
    <property type="entry name" value="METHIONYL-TRNA FORMYLTRANSFERASE, MITOCHONDRIAL"/>
    <property type="match status" value="1"/>
</dbReference>
<dbReference type="Pfam" id="PF02911">
    <property type="entry name" value="Formyl_trans_C"/>
    <property type="match status" value="1"/>
</dbReference>
<dbReference type="Pfam" id="PF00551">
    <property type="entry name" value="Formyl_trans_N"/>
    <property type="match status" value="1"/>
</dbReference>
<dbReference type="SUPFAM" id="SSF50486">
    <property type="entry name" value="FMT C-terminal domain-like"/>
    <property type="match status" value="1"/>
</dbReference>
<dbReference type="SUPFAM" id="SSF53328">
    <property type="entry name" value="Formyltransferase"/>
    <property type="match status" value="1"/>
</dbReference>
<dbReference type="PROSITE" id="PS00373">
    <property type="entry name" value="GART"/>
    <property type="match status" value="1"/>
</dbReference>
<reference key="1">
    <citation type="submission" date="2008-02" db="EMBL/GenBank/DDBJ databases">
        <title>Complete sequence of Pseudomonas putida W619.</title>
        <authorList>
            <person name="Copeland A."/>
            <person name="Lucas S."/>
            <person name="Lapidus A."/>
            <person name="Barry K."/>
            <person name="Detter J.C."/>
            <person name="Glavina del Rio T."/>
            <person name="Dalin E."/>
            <person name="Tice H."/>
            <person name="Pitluck S."/>
            <person name="Chain P."/>
            <person name="Malfatti S."/>
            <person name="Shin M."/>
            <person name="Vergez L."/>
            <person name="Schmutz J."/>
            <person name="Larimer F."/>
            <person name="Land M."/>
            <person name="Hauser L."/>
            <person name="Kyrpides N."/>
            <person name="Kim E."/>
            <person name="Taghavi S."/>
            <person name="Vangronsveld D."/>
            <person name="van der Lelie D."/>
            <person name="Richardson P."/>
        </authorList>
    </citation>
    <scope>NUCLEOTIDE SEQUENCE [LARGE SCALE GENOMIC DNA]</scope>
    <source>
        <strain>W619</strain>
    </source>
</reference>
<feature type="chain" id="PRO_1000098430" description="Methionyl-tRNA formyltransferase">
    <location>
        <begin position="1"/>
        <end position="310"/>
    </location>
</feature>
<feature type="binding site" evidence="1">
    <location>
        <begin position="109"/>
        <end position="112"/>
    </location>
    <ligand>
        <name>(6S)-5,6,7,8-tetrahydrofolate</name>
        <dbReference type="ChEBI" id="CHEBI:57453"/>
    </ligand>
</feature>
<organism>
    <name type="scientific">Pseudomonas putida (strain W619)</name>
    <dbReference type="NCBI Taxonomy" id="390235"/>
    <lineage>
        <taxon>Bacteria</taxon>
        <taxon>Pseudomonadati</taxon>
        <taxon>Pseudomonadota</taxon>
        <taxon>Gammaproteobacteria</taxon>
        <taxon>Pseudomonadales</taxon>
        <taxon>Pseudomonadaceae</taxon>
        <taxon>Pseudomonas</taxon>
    </lineage>
</organism>
<proteinExistence type="inferred from homology"/>
<evidence type="ECO:0000255" key="1">
    <source>
        <dbReference type="HAMAP-Rule" id="MF_00182"/>
    </source>
</evidence>
<comment type="function">
    <text evidence="1">Attaches a formyl group to the free amino group of methionyl-tRNA(fMet). The formyl group appears to play a dual role in the initiator identity of N-formylmethionyl-tRNA by promoting its recognition by IF2 and preventing the misappropriation of this tRNA by the elongation apparatus.</text>
</comment>
<comment type="catalytic activity">
    <reaction evidence="1">
        <text>L-methionyl-tRNA(fMet) + (6R)-10-formyltetrahydrofolate = N-formyl-L-methionyl-tRNA(fMet) + (6S)-5,6,7,8-tetrahydrofolate + H(+)</text>
        <dbReference type="Rhea" id="RHEA:24380"/>
        <dbReference type="Rhea" id="RHEA-COMP:9952"/>
        <dbReference type="Rhea" id="RHEA-COMP:9953"/>
        <dbReference type="ChEBI" id="CHEBI:15378"/>
        <dbReference type="ChEBI" id="CHEBI:57453"/>
        <dbReference type="ChEBI" id="CHEBI:78530"/>
        <dbReference type="ChEBI" id="CHEBI:78844"/>
        <dbReference type="ChEBI" id="CHEBI:195366"/>
        <dbReference type="EC" id="2.1.2.9"/>
    </reaction>
</comment>
<comment type="similarity">
    <text evidence="1">Belongs to the Fmt family.</text>
</comment>
<gene>
    <name evidence="1" type="primary">fmt</name>
    <name type="ordered locus">PputW619_0086</name>
</gene>
<sequence>MRIVFAGTPEFAAEHLKALLDSPYEIVAVYTQPDRPAGRGQKLMPSAVKALAVAHDIPVFQPPTLRNEDAQAELAALKPDLMVVVAYGLILPQVVLDIPRLGCINSHASLLPRWRGAAPIQRAVEAGDAESGVTVMRMEAGLDTGPMLLKVVTPISADDTGGSLHDRLAAMGPAAVVQAIAGLADGSLQGEVQDDALATYAHKLNKDEARIDWSRPAVELERLIRAFNPWPVCHSTLDGESVKVLAAKLSTGEGAPGEILSASKDGLVVACGDQALSLTRLQLPGGKALAFTDLFNSRREKFATGKVLGQ</sequence>
<protein>
    <recommendedName>
        <fullName evidence="1">Methionyl-tRNA formyltransferase</fullName>
        <ecNumber evidence="1">2.1.2.9</ecNumber>
    </recommendedName>
</protein>
<name>FMT_PSEPW</name>
<keyword id="KW-0648">Protein biosynthesis</keyword>
<keyword id="KW-0808">Transferase</keyword>